<name>ACPS_STAAM</name>
<gene>
    <name evidence="1" type="primary">acpS</name>
    <name type="synonym">dpj</name>
    <name type="ordered locus">SAV2071</name>
</gene>
<comment type="function">
    <text evidence="1">Transfers the 4'-phosphopantetheine moiety from coenzyme A to a Ser of acyl-carrier-protein.</text>
</comment>
<comment type="catalytic activity">
    <reaction evidence="1">
        <text>apo-[ACP] + CoA = holo-[ACP] + adenosine 3',5'-bisphosphate + H(+)</text>
        <dbReference type="Rhea" id="RHEA:12068"/>
        <dbReference type="Rhea" id="RHEA-COMP:9685"/>
        <dbReference type="Rhea" id="RHEA-COMP:9690"/>
        <dbReference type="ChEBI" id="CHEBI:15378"/>
        <dbReference type="ChEBI" id="CHEBI:29999"/>
        <dbReference type="ChEBI" id="CHEBI:57287"/>
        <dbReference type="ChEBI" id="CHEBI:58343"/>
        <dbReference type="ChEBI" id="CHEBI:64479"/>
        <dbReference type="EC" id="2.7.8.7"/>
    </reaction>
</comment>
<comment type="cofactor">
    <cofactor evidence="1">
        <name>Mg(2+)</name>
        <dbReference type="ChEBI" id="CHEBI:18420"/>
    </cofactor>
</comment>
<comment type="subcellular location">
    <subcellularLocation>
        <location evidence="1">Cytoplasm</location>
    </subcellularLocation>
</comment>
<comment type="similarity">
    <text evidence="1">Belongs to the P-Pant transferase superfamily. AcpS family.</text>
</comment>
<dbReference type="EC" id="2.7.8.7" evidence="1"/>
<dbReference type="EMBL" id="BA000017">
    <property type="protein sequence ID" value="BAB58233.1"/>
    <property type="molecule type" value="Genomic_DNA"/>
</dbReference>
<dbReference type="RefSeq" id="WP_000581197.1">
    <property type="nucleotide sequence ID" value="NC_002758.2"/>
</dbReference>
<dbReference type="SMR" id="P63468"/>
<dbReference type="KEGG" id="sav:SAV2071"/>
<dbReference type="HOGENOM" id="CLU_089696_1_2_9"/>
<dbReference type="PhylomeDB" id="P63468"/>
<dbReference type="Proteomes" id="UP000002481">
    <property type="component" value="Chromosome"/>
</dbReference>
<dbReference type="GO" id="GO:0005737">
    <property type="term" value="C:cytoplasm"/>
    <property type="evidence" value="ECO:0007669"/>
    <property type="project" value="UniProtKB-SubCell"/>
</dbReference>
<dbReference type="GO" id="GO:0008897">
    <property type="term" value="F:holo-[acyl-carrier-protein] synthase activity"/>
    <property type="evidence" value="ECO:0007669"/>
    <property type="project" value="UniProtKB-UniRule"/>
</dbReference>
<dbReference type="GO" id="GO:0000287">
    <property type="term" value="F:magnesium ion binding"/>
    <property type="evidence" value="ECO:0007669"/>
    <property type="project" value="UniProtKB-UniRule"/>
</dbReference>
<dbReference type="GO" id="GO:0006633">
    <property type="term" value="P:fatty acid biosynthetic process"/>
    <property type="evidence" value="ECO:0007669"/>
    <property type="project" value="UniProtKB-UniRule"/>
</dbReference>
<dbReference type="Gene3D" id="3.90.470.20">
    <property type="entry name" value="4'-phosphopantetheinyl transferase domain"/>
    <property type="match status" value="1"/>
</dbReference>
<dbReference type="HAMAP" id="MF_00101">
    <property type="entry name" value="AcpS"/>
    <property type="match status" value="1"/>
</dbReference>
<dbReference type="InterPro" id="IPR008278">
    <property type="entry name" value="4-PPantetheinyl_Trfase_dom"/>
</dbReference>
<dbReference type="InterPro" id="IPR037143">
    <property type="entry name" value="4-PPantetheinyl_Trfase_dom_sf"/>
</dbReference>
<dbReference type="InterPro" id="IPR002582">
    <property type="entry name" value="ACPS"/>
</dbReference>
<dbReference type="InterPro" id="IPR004568">
    <property type="entry name" value="Ppantetheine-prot_Trfase_dom"/>
</dbReference>
<dbReference type="NCBIfam" id="TIGR00516">
    <property type="entry name" value="acpS"/>
    <property type="match status" value="1"/>
</dbReference>
<dbReference type="NCBIfam" id="TIGR00556">
    <property type="entry name" value="pantethn_trn"/>
    <property type="match status" value="1"/>
</dbReference>
<dbReference type="Pfam" id="PF01648">
    <property type="entry name" value="ACPS"/>
    <property type="match status" value="1"/>
</dbReference>
<dbReference type="SUPFAM" id="SSF56214">
    <property type="entry name" value="4'-phosphopantetheinyl transferase"/>
    <property type="match status" value="1"/>
</dbReference>
<proteinExistence type="inferred from homology"/>
<accession>P63468</accession>
<accession>Q99SI4</accession>
<keyword id="KW-0963">Cytoplasm</keyword>
<keyword id="KW-0275">Fatty acid biosynthesis</keyword>
<keyword id="KW-0276">Fatty acid metabolism</keyword>
<keyword id="KW-0444">Lipid biosynthesis</keyword>
<keyword id="KW-0443">Lipid metabolism</keyword>
<keyword id="KW-0460">Magnesium</keyword>
<keyword id="KW-0479">Metal-binding</keyword>
<keyword id="KW-0808">Transferase</keyword>
<reference key="1">
    <citation type="journal article" date="2001" name="Lancet">
        <title>Whole genome sequencing of meticillin-resistant Staphylococcus aureus.</title>
        <authorList>
            <person name="Kuroda M."/>
            <person name="Ohta T."/>
            <person name="Uchiyama I."/>
            <person name="Baba T."/>
            <person name="Yuzawa H."/>
            <person name="Kobayashi I."/>
            <person name="Cui L."/>
            <person name="Oguchi A."/>
            <person name="Aoki K."/>
            <person name="Nagai Y."/>
            <person name="Lian J.-Q."/>
            <person name="Ito T."/>
            <person name="Kanamori M."/>
            <person name="Matsumaru H."/>
            <person name="Maruyama A."/>
            <person name="Murakami H."/>
            <person name="Hosoyama A."/>
            <person name="Mizutani-Ui Y."/>
            <person name="Takahashi N.K."/>
            <person name="Sawano T."/>
            <person name="Inoue R."/>
            <person name="Kaito C."/>
            <person name="Sekimizu K."/>
            <person name="Hirakawa H."/>
            <person name="Kuhara S."/>
            <person name="Goto S."/>
            <person name="Yabuzaki J."/>
            <person name="Kanehisa M."/>
            <person name="Yamashita A."/>
            <person name="Oshima K."/>
            <person name="Furuya K."/>
            <person name="Yoshino C."/>
            <person name="Shiba T."/>
            <person name="Hattori M."/>
            <person name="Ogasawara N."/>
            <person name="Hayashi H."/>
            <person name="Hiramatsu K."/>
        </authorList>
    </citation>
    <scope>NUCLEOTIDE SEQUENCE [LARGE SCALE GENOMIC DNA]</scope>
    <source>
        <strain>Mu50 / ATCC 700699</strain>
    </source>
</reference>
<protein>
    <recommendedName>
        <fullName evidence="1">Holo-[acyl-carrier-protein] synthase</fullName>
        <shortName evidence="1">Holo-ACP synthase</shortName>
        <ecNumber evidence="1">2.7.8.7</ecNumber>
    </recommendedName>
    <alternativeName>
        <fullName evidence="1">4'-phosphopantetheinyl transferase AcpS</fullName>
    </alternativeName>
</protein>
<feature type="chain" id="PRO_0000175701" description="Holo-[acyl-carrier-protein] synthase">
    <location>
        <begin position="1"/>
        <end position="119"/>
    </location>
</feature>
<feature type="binding site" evidence="1">
    <location>
        <position position="8"/>
    </location>
    <ligand>
        <name>Mg(2+)</name>
        <dbReference type="ChEBI" id="CHEBI:18420"/>
    </ligand>
</feature>
<feature type="binding site" evidence="1">
    <location>
        <position position="59"/>
    </location>
    <ligand>
        <name>Mg(2+)</name>
        <dbReference type="ChEBI" id="CHEBI:18420"/>
    </ligand>
</feature>
<sequence length="119" mass="13634">MIHGIGVDLIEIDRIKVLYSKQPKLVERILTKNEQHKFNNFTHEQRKIEFLAGRFATKEAFSKALGTGLGKHVAFNDIDCYNDELGKPKIDYEGFIVHVSISHTEHYAMSQVVLEKSAF</sequence>
<evidence type="ECO:0000255" key="1">
    <source>
        <dbReference type="HAMAP-Rule" id="MF_00101"/>
    </source>
</evidence>
<organism>
    <name type="scientific">Staphylococcus aureus (strain Mu50 / ATCC 700699)</name>
    <dbReference type="NCBI Taxonomy" id="158878"/>
    <lineage>
        <taxon>Bacteria</taxon>
        <taxon>Bacillati</taxon>
        <taxon>Bacillota</taxon>
        <taxon>Bacilli</taxon>
        <taxon>Bacillales</taxon>
        <taxon>Staphylococcaceae</taxon>
        <taxon>Staphylococcus</taxon>
    </lineage>
</organism>